<dbReference type="EC" id="1.1.1.42" evidence="1"/>
<dbReference type="EMBL" id="CP000053">
    <property type="protein sequence ID" value="AAY61866.1"/>
    <property type="status" value="ALT_INIT"/>
    <property type="molecule type" value="Genomic_DNA"/>
</dbReference>
<dbReference type="SMR" id="Q4UKR1"/>
<dbReference type="STRING" id="315456.RF_1015"/>
<dbReference type="KEGG" id="rfe:RF_1015"/>
<dbReference type="eggNOG" id="COG0473">
    <property type="taxonomic scope" value="Bacteria"/>
</dbReference>
<dbReference type="HOGENOM" id="CLU_031953_1_2_5"/>
<dbReference type="OrthoDB" id="9767905at2"/>
<dbReference type="Proteomes" id="UP000008548">
    <property type="component" value="Chromosome"/>
</dbReference>
<dbReference type="GO" id="GO:0004449">
    <property type="term" value="F:isocitrate dehydrogenase (NAD+) activity"/>
    <property type="evidence" value="ECO:0007669"/>
    <property type="project" value="TreeGrafter"/>
</dbReference>
<dbReference type="GO" id="GO:0004450">
    <property type="term" value="F:isocitrate dehydrogenase (NADP+) activity"/>
    <property type="evidence" value="ECO:0007669"/>
    <property type="project" value="UniProtKB-EC"/>
</dbReference>
<dbReference type="GO" id="GO:0000287">
    <property type="term" value="F:magnesium ion binding"/>
    <property type="evidence" value="ECO:0007669"/>
    <property type="project" value="InterPro"/>
</dbReference>
<dbReference type="GO" id="GO:0051287">
    <property type="term" value="F:NAD binding"/>
    <property type="evidence" value="ECO:0007669"/>
    <property type="project" value="InterPro"/>
</dbReference>
<dbReference type="GO" id="GO:0006097">
    <property type="term" value="P:glyoxylate cycle"/>
    <property type="evidence" value="ECO:0007669"/>
    <property type="project" value="UniProtKB-KW"/>
</dbReference>
<dbReference type="GO" id="GO:0006102">
    <property type="term" value="P:isocitrate metabolic process"/>
    <property type="evidence" value="ECO:0007669"/>
    <property type="project" value="TreeGrafter"/>
</dbReference>
<dbReference type="GO" id="GO:0006099">
    <property type="term" value="P:tricarboxylic acid cycle"/>
    <property type="evidence" value="ECO:0007669"/>
    <property type="project" value="UniProtKB-KW"/>
</dbReference>
<dbReference type="FunFam" id="3.40.718.10:FF:000020">
    <property type="entry name" value="Isocitrate dehydrogenase"/>
    <property type="match status" value="1"/>
</dbReference>
<dbReference type="Gene3D" id="3.30.70.1570">
    <property type="match status" value="1"/>
</dbReference>
<dbReference type="Gene3D" id="3.40.718.10">
    <property type="entry name" value="Isopropylmalate Dehydrogenase"/>
    <property type="match status" value="1"/>
</dbReference>
<dbReference type="InterPro" id="IPR019818">
    <property type="entry name" value="IsoCit/isopropylmalate_DH_CS"/>
</dbReference>
<dbReference type="InterPro" id="IPR014273">
    <property type="entry name" value="Isocitrate_DH_bac-typ"/>
</dbReference>
<dbReference type="InterPro" id="IPR040978">
    <property type="entry name" value="Isocitrate_DH_TT1725_C"/>
</dbReference>
<dbReference type="InterPro" id="IPR046997">
    <property type="entry name" value="Isocitrate_DH_TT1725_C_sf"/>
</dbReference>
<dbReference type="InterPro" id="IPR024084">
    <property type="entry name" value="IsoPropMal-DH-like_dom"/>
</dbReference>
<dbReference type="NCBIfam" id="TIGR02924">
    <property type="entry name" value="ICDH_alpha"/>
    <property type="match status" value="1"/>
</dbReference>
<dbReference type="NCBIfam" id="NF006673">
    <property type="entry name" value="PRK09222.1"/>
    <property type="match status" value="1"/>
</dbReference>
<dbReference type="PANTHER" id="PTHR11835">
    <property type="entry name" value="DECARBOXYLATING DEHYDROGENASES-ISOCITRATE, ISOPROPYLMALATE, TARTRATE"/>
    <property type="match status" value="1"/>
</dbReference>
<dbReference type="PANTHER" id="PTHR11835:SF43">
    <property type="entry name" value="ISOPROPYLMALATE DEHYDROGENASE-LIKE DOMAIN-CONTAINING PROTEIN"/>
    <property type="match status" value="1"/>
</dbReference>
<dbReference type="Pfam" id="PF00180">
    <property type="entry name" value="Iso_dh"/>
    <property type="match status" value="1"/>
</dbReference>
<dbReference type="Pfam" id="PF18324">
    <property type="entry name" value="Isocitrate_DH_C_bact"/>
    <property type="match status" value="1"/>
</dbReference>
<dbReference type="SMART" id="SM01329">
    <property type="entry name" value="Iso_dh"/>
    <property type="match status" value="1"/>
</dbReference>
<dbReference type="SUPFAM" id="SSF53659">
    <property type="entry name" value="Isocitrate/Isopropylmalate dehydrogenase-like"/>
    <property type="match status" value="1"/>
</dbReference>
<dbReference type="PROSITE" id="PS00470">
    <property type="entry name" value="IDH_IMDH"/>
    <property type="match status" value="1"/>
</dbReference>
<comment type="function">
    <text evidence="1">Catalyzes the oxidative decarboxylation of isocitrate to 2-oxoglutarate and carbon dioxide with the concomitant reduction of NADP(+).</text>
</comment>
<comment type="catalytic activity">
    <reaction evidence="1">
        <text>D-threo-isocitrate + NADP(+) = 2-oxoglutarate + CO2 + NADPH</text>
        <dbReference type="Rhea" id="RHEA:19629"/>
        <dbReference type="ChEBI" id="CHEBI:15562"/>
        <dbReference type="ChEBI" id="CHEBI:16526"/>
        <dbReference type="ChEBI" id="CHEBI:16810"/>
        <dbReference type="ChEBI" id="CHEBI:57783"/>
        <dbReference type="ChEBI" id="CHEBI:58349"/>
        <dbReference type="EC" id="1.1.1.42"/>
    </reaction>
</comment>
<comment type="cofactor">
    <cofactor evidence="1">
        <name>Mg(2+)</name>
        <dbReference type="ChEBI" id="CHEBI:18420"/>
    </cofactor>
    <cofactor evidence="1">
        <name>Mn(2+)</name>
        <dbReference type="ChEBI" id="CHEBI:29035"/>
    </cofactor>
    <text evidence="1">Binds 1 Mg(2+) or Mn(2+) ion per subunit.</text>
</comment>
<comment type="subunit">
    <text evidence="1">Homodimer.</text>
</comment>
<comment type="similarity">
    <text evidence="2">Belongs to the isocitrate and isopropylmalate dehydrogenases family.</text>
</comment>
<comment type="sequence caution" evidence="2">
    <conflict type="erroneous initiation">
        <sequence resource="EMBL-CDS" id="AAY61866"/>
    </conflict>
</comment>
<reference key="1">
    <citation type="journal article" date="2005" name="PLoS Biol.">
        <title>The genome sequence of Rickettsia felis identifies the first putative conjugative plasmid in an obligate intracellular parasite.</title>
        <authorList>
            <person name="Ogata H."/>
            <person name="Renesto P."/>
            <person name="Audic S."/>
            <person name="Robert C."/>
            <person name="Blanc G."/>
            <person name="Fournier P.-E."/>
            <person name="Parinello H."/>
            <person name="Claverie J.-M."/>
            <person name="Raoult D."/>
        </authorList>
    </citation>
    <scope>NUCLEOTIDE SEQUENCE [LARGE SCALE GENOMIC DNA]</scope>
    <source>
        <strain>ATCC VR-1525 / URRWXCal2</strain>
    </source>
</reference>
<name>IDH_RICFE</name>
<keyword id="KW-0329">Glyoxylate bypass</keyword>
<keyword id="KW-0460">Magnesium</keyword>
<keyword id="KW-0464">Manganese</keyword>
<keyword id="KW-0479">Metal-binding</keyword>
<keyword id="KW-0521">NADP</keyword>
<keyword id="KW-0560">Oxidoreductase</keyword>
<keyword id="KW-0816">Tricarboxylic acid cycle</keyword>
<organism>
    <name type="scientific">Rickettsia felis (strain ATCC VR-1525 / URRWXCal2)</name>
    <name type="common">Rickettsia azadi</name>
    <dbReference type="NCBI Taxonomy" id="315456"/>
    <lineage>
        <taxon>Bacteria</taxon>
        <taxon>Pseudomonadati</taxon>
        <taxon>Pseudomonadota</taxon>
        <taxon>Alphaproteobacteria</taxon>
        <taxon>Rickettsiales</taxon>
        <taxon>Rickettsiaceae</taxon>
        <taxon>Rickettsieae</taxon>
        <taxon>Rickettsia</taxon>
        <taxon>spotted fever group</taxon>
    </lineage>
</organism>
<feature type="chain" id="PRO_0000292203" description="Isocitrate dehydrogenase [NADP]">
    <location>
        <begin position="1"/>
        <end position="483"/>
    </location>
</feature>
<feature type="binding site" evidence="1">
    <location>
        <position position="74"/>
    </location>
    <ligand>
        <name>NADP(+)</name>
        <dbReference type="ChEBI" id="CHEBI:58349"/>
    </ligand>
</feature>
<feature type="binding site" evidence="1">
    <location>
        <position position="83"/>
    </location>
    <ligand>
        <name>D-threo-isocitrate</name>
        <dbReference type="ChEBI" id="CHEBI:15562"/>
    </ligand>
</feature>
<feature type="binding site" evidence="1">
    <location>
        <position position="85"/>
    </location>
    <ligand>
        <name>D-threo-isocitrate</name>
        <dbReference type="ChEBI" id="CHEBI:15562"/>
    </ligand>
</feature>
<feature type="binding site" evidence="1">
    <location>
        <position position="89"/>
    </location>
    <ligand>
        <name>D-threo-isocitrate</name>
        <dbReference type="ChEBI" id="CHEBI:15562"/>
    </ligand>
</feature>
<feature type="binding site" evidence="1">
    <location>
        <position position="99"/>
    </location>
    <ligand>
        <name>D-threo-isocitrate</name>
        <dbReference type="ChEBI" id="CHEBI:15562"/>
    </ligand>
</feature>
<feature type="binding site" evidence="1">
    <location>
        <position position="121"/>
    </location>
    <ligand>
        <name>D-threo-isocitrate</name>
        <dbReference type="ChEBI" id="CHEBI:15562"/>
    </ligand>
</feature>
<feature type="binding site" evidence="1">
    <location>
        <position position="232"/>
    </location>
    <ligand>
        <name>Mg(2+)</name>
        <dbReference type="ChEBI" id="CHEBI:18420"/>
    </ligand>
</feature>
<feature type="binding site" evidence="1">
    <location>
        <begin position="264"/>
        <end position="270"/>
    </location>
    <ligand>
        <name>NADP(+)</name>
        <dbReference type="ChEBI" id="CHEBI:58349"/>
    </ligand>
</feature>
<feature type="binding site" evidence="1">
    <location>
        <position position="277"/>
    </location>
    <ligand>
        <name>NADP(+)</name>
        <dbReference type="ChEBI" id="CHEBI:58349"/>
    </ligand>
</feature>
<feature type="site" description="Critical for catalysis" evidence="1">
    <location>
        <position position="128"/>
    </location>
</feature>
<feature type="site" description="Critical for catalysis" evidence="1">
    <location>
        <position position="175"/>
    </location>
</feature>
<protein>
    <recommendedName>
        <fullName>Isocitrate dehydrogenase [NADP]</fullName>
        <shortName>IDH</shortName>
        <ecNumber evidence="1">1.1.1.42</ecNumber>
    </recommendedName>
    <alternativeName>
        <fullName>IDP</fullName>
    </alternativeName>
    <alternativeName>
        <fullName>NADP(+)-specific ICDH</fullName>
    </alternativeName>
    <alternativeName>
        <fullName>Oxalosuccinate decarboxylase</fullName>
    </alternativeName>
</protein>
<proteinExistence type="inferred from homology"/>
<gene>
    <name type="primary">icd</name>
    <name type="ordered locus">RF_1015</name>
</gene>
<accession>Q4UKR1</accession>
<sequence length="483" mass="54062">MAEFTPITIAYGDGIGPEIMEAVLYILRKAEARIRLETIEVGEKLYKKHYTSGISEESWESIQRTGIILKAPITTPQGGGYKSLNVTIRKTLQLFANIRPSVSFHPFTMTLHPHLNLTIIRENEEDLYAGIEYRQTHNMYESIKLISHTGCEKIIRYAFEYAVKNNRKKVTCLSKDNIMKFSDGVFHKIFNEIAKEYPQINNEHYIIDIGTARLATKPEIFDVIVTSNLYGDIISDVAAEISGSVGLAGSANIGQHYAMFEAVHGSAPDIAGKDIANPSGLLNAAIMMLVHIGQGDIASLIENAWKKTIEDGVHTADIYNEQNSSKKVGTKEFAEEVTKRLGQIPTKLPKADYPLIAEKQESNIDYKIDTNEVKKLVGTDIFVNMNISSAHDIADKINKLDLGNIELKTISSKGLKLWPRDTRFETISDHWCCRFMNKDGTEIKHLDITRLLEALSKANIDFIKVENLFEFDGVAGYSLAQGE</sequence>
<evidence type="ECO:0000250" key="1">
    <source>
        <dbReference type="UniProtKB" id="P08200"/>
    </source>
</evidence>
<evidence type="ECO:0000305" key="2"/>